<evidence type="ECO:0000255" key="1">
    <source>
        <dbReference type="HAMAP-Rule" id="MF_04062"/>
    </source>
</evidence>
<protein>
    <recommendedName>
        <fullName evidence="1">Polymerase basic protein 2</fullName>
    </recommendedName>
    <alternativeName>
        <fullName evidence="1">RNA-directed RNA polymerase subunit P3</fullName>
    </alternativeName>
</protein>
<organismHost>
    <name type="scientific">Aves</name>
    <dbReference type="NCBI Taxonomy" id="8782"/>
</organismHost>
<organismHost>
    <name type="scientific">Homo sapiens</name>
    <name type="common">Human</name>
    <dbReference type="NCBI Taxonomy" id="9606"/>
</organismHost>
<organismHost>
    <name type="scientific">Sus scrofa</name>
    <name type="common">Pig</name>
    <dbReference type="NCBI Taxonomy" id="9823"/>
</organismHost>
<name>PB2_I07A0</name>
<sequence length="759" mass="85882">MERIKELRNLMSQSRTREILTRTTVDHMAIIKKYTSGRQEKNPSLRMKWMMAMKYPITADKKITEMIPERNEQGQTLWSKVNDAGSDRVMISPLAVTWWNRNGPVANTIHYPKIYKTYFEKVERLKHGTFGPVHFRNQVKIRRRVDINPGHADLSAKEAQDVIMEVVFPNEVGARILTSESQLTITKEKKEELQNCKISPLMVAYMLERELVRKTRFLPVAGGTSSVYIEVLHLTQGTCWEQMYTPGGEVRNDDVDQSLIIAARNIVRRAAVSADPLASLLEMCHSTQIGGTRMVDILRQNPTEEQAVGICKAAMGLRISSSFSFGGFTFKRTSGSSVKREEEVLTGNLQALKLTVHEGYEEFTMVGKRATAILKKATRRLIQLIVSGRDEQSIVEAIVVAMVFSQEDCMVKAVRGDLNFVNRANQRLNPMHQLLRHFQKDAKVLFLNWGIEHIDNVMGMIGILPDMTPSTEMSMRGVRVSKMGVDEYSNAERVVVSIDRFLRVRDQRGNVLLSPEEVSETQGTEKLTITYSSSLMWEINGPESVLINTYQWIIRNWETVKIQWSQNPTMLYNKMEFEPFQSLVPKAIRGQYSGFVRTLFQQMRDVLGTFDTTQIIKLLPFAAAPPKQSRMQFSSLTVNVRGSGMRILVRGNSPVFNYNKTTKRLTILGKDAGTLTEDPDEGTAGVESAVLRGFLILGKEDRRYGPALSINELSNLAKGEKANVLIGQGDVVLVMKRKRDSSILTDSQTATKRIRMAIN</sequence>
<keyword id="KW-1157">Cap snatching</keyword>
<keyword id="KW-1262">Eukaryotic host gene expression shutoff by virus</keyword>
<keyword id="KW-1191">Eukaryotic host transcription shutoff by virus</keyword>
<keyword id="KW-1190">Host gene expression shutoff by virus</keyword>
<keyword id="KW-1045">Host mitochondrion</keyword>
<keyword id="KW-1048">Host nucleus</keyword>
<keyword id="KW-0945">Host-virus interaction</keyword>
<keyword id="KW-1090">Inhibition of host innate immune response by virus</keyword>
<keyword id="KW-1097">Inhibition of host MAVS by virus</keyword>
<keyword id="KW-1113">Inhibition of host RLR pathway by virus</keyword>
<keyword id="KW-1104">Inhibition of host RNA polymerase II by virus</keyword>
<keyword id="KW-0506">mRNA capping</keyword>
<keyword id="KW-0507">mRNA processing</keyword>
<keyword id="KW-0899">Viral immunoevasion</keyword>
<keyword id="KW-1195">Viral transcription</keyword>
<keyword id="KW-0946">Virion</keyword>
<feature type="chain" id="PRO_0000373029" description="Polymerase basic protein 2">
    <location>
        <begin position="1"/>
        <end position="759"/>
    </location>
</feature>
<feature type="short sequence motif" description="Nuclear localization signal" evidence="1">
    <location>
        <begin position="736"/>
        <end position="739"/>
    </location>
</feature>
<feature type="site" description="Mammalian adaptation" evidence="1">
    <location>
        <position position="627"/>
    </location>
</feature>
<dbReference type="EMBL" id="CY026218">
    <property type="protein sequence ID" value="ABV45936.1"/>
    <property type="molecule type" value="Viral_cRNA"/>
</dbReference>
<dbReference type="SMR" id="A8C8K4"/>
<dbReference type="Proteomes" id="UP001395887">
    <property type="component" value="Genome"/>
</dbReference>
<dbReference type="GO" id="GO:0033650">
    <property type="term" value="C:host cell mitochondrion"/>
    <property type="evidence" value="ECO:0007669"/>
    <property type="project" value="UniProtKB-SubCell"/>
</dbReference>
<dbReference type="GO" id="GO:0042025">
    <property type="term" value="C:host cell nucleus"/>
    <property type="evidence" value="ECO:0007669"/>
    <property type="project" value="UniProtKB-SubCell"/>
</dbReference>
<dbReference type="GO" id="GO:0044423">
    <property type="term" value="C:virion component"/>
    <property type="evidence" value="ECO:0007669"/>
    <property type="project" value="UniProtKB-UniRule"/>
</dbReference>
<dbReference type="GO" id="GO:0003723">
    <property type="term" value="F:RNA binding"/>
    <property type="evidence" value="ECO:0007669"/>
    <property type="project" value="UniProtKB-UniRule"/>
</dbReference>
<dbReference type="GO" id="GO:0003968">
    <property type="term" value="F:RNA-directed RNA polymerase activity"/>
    <property type="evidence" value="ECO:0007669"/>
    <property type="project" value="UniProtKB-UniRule"/>
</dbReference>
<dbReference type="GO" id="GO:0006370">
    <property type="term" value="P:7-methylguanosine mRNA capping"/>
    <property type="evidence" value="ECO:0007669"/>
    <property type="project" value="UniProtKB-UniRule"/>
</dbReference>
<dbReference type="GO" id="GO:0075526">
    <property type="term" value="P:cap snatching"/>
    <property type="evidence" value="ECO:0007669"/>
    <property type="project" value="UniProtKB-UniRule"/>
</dbReference>
<dbReference type="GO" id="GO:0006351">
    <property type="term" value="P:DNA-templated transcription"/>
    <property type="evidence" value="ECO:0007669"/>
    <property type="project" value="UniProtKB-UniRule"/>
</dbReference>
<dbReference type="GO" id="GO:0039545">
    <property type="term" value="P:symbiont-mediated suppression of host cytoplasmic pattern recognition receptor signaling pathway via inhibition of MAVS activity"/>
    <property type="evidence" value="ECO:0007669"/>
    <property type="project" value="UniProtKB-UniRule"/>
</dbReference>
<dbReference type="GO" id="GO:0039657">
    <property type="term" value="P:symbiont-mediated suppression of host gene expression"/>
    <property type="evidence" value="ECO:0007669"/>
    <property type="project" value="UniProtKB-KW"/>
</dbReference>
<dbReference type="GO" id="GO:0039523">
    <property type="term" value="P:symbiont-mediated suppression of host mRNA transcription via inhibition of RNA polymerase II activity"/>
    <property type="evidence" value="ECO:0007669"/>
    <property type="project" value="UniProtKB-UniRule"/>
</dbReference>
<dbReference type="GO" id="GO:0039694">
    <property type="term" value="P:viral RNA genome replication"/>
    <property type="evidence" value="ECO:0007669"/>
    <property type="project" value="InterPro"/>
</dbReference>
<dbReference type="FunFam" id="3.30.30.90:FF:000001">
    <property type="entry name" value="Polymerase basic protein 2"/>
    <property type="match status" value="1"/>
</dbReference>
<dbReference type="Gene3D" id="3.30.30.90">
    <property type="entry name" value="Polymerase Basic Protein 2, C-terminal domain"/>
    <property type="match status" value="1"/>
</dbReference>
<dbReference type="HAMAP" id="MF_04062">
    <property type="entry name" value="INV_PB2"/>
    <property type="match status" value="1"/>
</dbReference>
<dbReference type="InterPro" id="IPR049110">
    <property type="entry name" value="Flu_PB2_2nd"/>
</dbReference>
<dbReference type="InterPro" id="IPR049114">
    <property type="entry name" value="Flu_PB2_6th"/>
</dbReference>
<dbReference type="InterPro" id="IPR049115">
    <property type="entry name" value="Flu_PB2_C"/>
</dbReference>
<dbReference type="InterPro" id="IPR048298">
    <property type="entry name" value="Flu_PB2_CAP-bd"/>
</dbReference>
<dbReference type="InterPro" id="IPR049111">
    <property type="entry name" value="Flu_PB2_middle"/>
</dbReference>
<dbReference type="InterPro" id="IPR049106">
    <property type="entry name" value="Flu_PB2_N"/>
</dbReference>
<dbReference type="InterPro" id="IPR001591">
    <property type="entry name" value="INV_PB2"/>
</dbReference>
<dbReference type="InterPro" id="IPR049113">
    <property type="entry name" value="PB2_helical"/>
</dbReference>
<dbReference type="InterPro" id="IPR037258">
    <property type="entry name" value="PDB2_C"/>
</dbReference>
<dbReference type="Pfam" id="PF20947">
    <property type="entry name" value="Flu_PB2_1st"/>
    <property type="match status" value="1"/>
</dbReference>
<dbReference type="Pfam" id="PF20948">
    <property type="entry name" value="Flu_PB2_2nd"/>
    <property type="match status" value="1"/>
</dbReference>
<dbReference type="Pfam" id="PF20949">
    <property type="entry name" value="Flu_PB2_3rd"/>
    <property type="match status" value="1"/>
</dbReference>
<dbReference type="Pfam" id="PF20950">
    <property type="entry name" value="Flu_PB2_4th"/>
    <property type="match status" value="1"/>
</dbReference>
<dbReference type="Pfam" id="PF00604">
    <property type="entry name" value="Flu_PB2_5th"/>
    <property type="match status" value="1"/>
</dbReference>
<dbReference type="Pfam" id="PF20951">
    <property type="entry name" value="Flu_PB2_6th"/>
    <property type="match status" value="1"/>
</dbReference>
<dbReference type="Pfam" id="PF20952">
    <property type="entry name" value="Flu_PB2_7th"/>
    <property type="match status" value="1"/>
</dbReference>
<dbReference type="SUPFAM" id="SSF160453">
    <property type="entry name" value="PB2 C-terminal domain-like"/>
    <property type="match status" value="1"/>
</dbReference>
<reference key="1">
    <citation type="submission" date="2007-09" db="EMBL/GenBank/DDBJ databases">
        <title>The NIAID influenza genome sequencing project.</title>
        <authorList>
            <person name="Spiro D."/>
            <person name="Sengamalay N."/>
            <person name="Boyne A."/>
            <person name="Bera J."/>
            <person name="Zaborsky J."/>
            <person name="Subbu V."/>
            <person name="Sparenborg J."/>
            <person name="Gallagher T."/>
            <person name="Overton L."/>
            <person name="Althoff R."/>
            <person name="Liu X."/>
            <person name="Ghedin E."/>
            <person name="Sitz J."/>
            <person name="Katzel D."/>
            <person name="Neupane R."/>
            <person name="Shumway M."/>
            <person name="Koo H."/>
            <person name="Edelman L."/>
            <person name="Menegus M."/>
            <person name="Mayer C."/>
            <person name="Dale S."/>
            <person name="Bao Y."/>
            <person name="Bolotov P."/>
            <person name="Dernovoy D."/>
            <person name="Kiryutin B."/>
            <person name="Lipman D.J."/>
            <person name="Tatusova T."/>
        </authorList>
    </citation>
    <scope>NUCLEOTIDE SEQUENCE [GENOMIC RNA]</scope>
</reference>
<reference key="2">
    <citation type="submission" date="2007-09" db="EMBL/GenBank/DDBJ databases">
        <authorList>
            <consortium name="The NIAID Influenza Genome Sequencing Consortium"/>
        </authorList>
    </citation>
    <scope>NUCLEOTIDE SEQUENCE [GENOMIC RNA]</scope>
</reference>
<comment type="function">
    <text evidence="1">Plays an essential role in transcription initiation and cap-stealing mechanism, in which cellular capped pre-mRNAs are used to generate primers for viral transcription. Recognizes and binds the 7-methylguanosine-containing cap of the target pre-RNA which is subsequently cleaved after 10-13 nucleotides by the viral protein PA. Plays a role in the initiation of the viral genome replication and modulates the activity of the ribonucleoprotein (RNP) complex. In addition, participates in the inhibition of type I interferon induction through interaction with and inhibition of the host mitochondrial antiviral signaling protein MAVS.</text>
</comment>
<comment type="subunit">
    <text evidence="1">Influenza RNA polymerase is composed of three subunits: PB1, PB2 and PA. Interacts (via N-terminus) with PB1 (via C-terminus). Interacts with nucleoprotein NP (via N-terminus). Interacts (via N-terminus) with host MAVS (via N-terminus); this interaction inhibits host innate immune response.</text>
</comment>
<comment type="subcellular location">
    <subcellularLocation>
        <location evidence="1">Virion</location>
    </subcellularLocation>
    <subcellularLocation>
        <location evidence="1">Host nucleus</location>
    </subcellularLocation>
    <subcellularLocation>
        <location evidence="1">Host mitochondrion</location>
    </subcellularLocation>
</comment>
<comment type="similarity">
    <text evidence="1">Belongs to the influenza viruses PB2 family.</text>
</comment>
<proteinExistence type="inferred from homology"/>
<organism>
    <name type="scientific">Influenza A virus (strain A/USA:Texas/UR06-0195/2007 H1N1)</name>
    <dbReference type="NCBI Taxonomy" id="455880"/>
    <lineage>
        <taxon>Viruses</taxon>
        <taxon>Riboviria</taxon>
        <taxon>Orthornavirae</taxon>
        <taxon>Negarnaviricota</taxon>
        <taxon>Polyploviricotina</taxon>
        <taxon>Insthoviricetes</taxon>
        <taxon>Articulavirales</taxon>
        <taxon>Orthomyxoviridae</taxon>
        <taxon>Alphainfluenzavirus</taxon>
        <taxon>Alphainfluenzavirus influenzae</taxon>
        <taxon>Influenza A virus</taxon>
    </lineage>
</organism>
<gene>
    <name evidence="1" type="primary">PB2</name>
</gene>
<accession>A8C8K4</accession>